<reference key="1">
    <citation type="journal article" date="1989" name="Plant Mol. Biol.">
        <title>Cloning and nucleotide sequence of the alpha-galactosidase cDNA from Cyamopsis tetragonoloba (guar).</title>
        <authorList>
            <person name="Overbeeke N."/>
            <person name="Fellinger A.J."/>
            <person name="Toonen M.Y."/>
            <person name="van Wassenaar D."/>
            <person name="Verrips C.T."/>
        </authorList>
    </citation>
    <scope>NUCLEOTIDE SEQUENCE [MRNA]</scope>
    <source>
        <tissue>Aleurone</tissue>
    </source>
</reference>
<reference key="2">
    <citation type="journal article" date="1988" name="Plant Mol. Biol.">
        <title>Messenger RNA from isolated aleurone cells directs the synthesis of an alpha-galactosidase found in the endosperm during germination of guar (Cyamopsis tetragonaloba) seed.</title>
        <authorList>
            <person name="Hughes S.G."/>
            <person name="Overbeeke N."/>
            <person name="Robinson S."/>
            <person name="Pollock K."/>
            <person name="Smeets F.L.M."/>
        </authorList>
        <dbReference type="AGRICOLA" id="IND91035194"/>
    </citation>
    <scope>PROTEIN SEQUENCE OF 48-57 AND 172-178</scope>
    <source>
        <tissue>Seed</tissue>
    </source>
</reference>
<protein>
    <recommendedName>
        <fullName>Alpha-galactosidase</fullName>
        <ecNumber>3.2.1.22</ecNumber>
    </recommendedName>
    <alternativeName>
        <fullName>Alpha-D-galactoside galactohydrolase</fullName>
    </alternativeName>
    <alternativeName>
        <fullName>Melibiase</fullName>
    </alternativeName>
</protein>
<proteinExistence type="evidence at protein level"/>
<keyword id="KW-0903">Direct protein sequencing</keyword>
<keyword id="KW-1015">Disulfide bond</keyword>
<keyword id="KW-0325">Glycoprotein</keyword>
<keyword id="KW-0326">Glycosidase</keyword>
<keyword id="KW-0378">Hydrolase</keyword>
<keyword id="KW-0732">Signal</keyword>
<name>AGAL_CYATE</name>
<organism>
    <name type="scientific">Cyamopsis tetragonoloba</name>
    <name type="common">Guar</name>
    <name type="synonym">Cluster bean</name>
    <dbReference type="NCBI Taxonomy" id="3832"/>
    <lineage>
        <taxon>Eukaryota</taxon>
        <taxon>Viridiplantae</taxon>
        <taxon>Streptophyta</taxon>
        <taxon>Embryophyta</taxon>
        <taxon>Tracheophyta</taxon>
        <taxon>Spermatophyta</taxon>
        <taxon>Magnoliopsida</taxon>
        <taxon>eudicotyledons</taxon>
        <taxon>Gunneridae</taxon>
        <taxon>Pentapetalae</taxon>
        <taxon>rosids</taxon>
        <taxon>fabids</taxon>
        <taxon>Fabales</taxon>
        <taxon>Fabaceae</taxon>
        <taxon>Papilionoideae</taxon>
        <taxon>50 kb inversion clade</taxon>
        <taxon>NPAAA clade</taxon>
        <taxon>indigoferoid/millettioid clade</taxon>
        <taxon>Indigofereae</taxon>
        <taxon>Cyamopsis</taxon>
    </lineage>
</organism>
<comment type="function">
    <text>Involved in the hydrolysis of the galactomannan, it splits alpha-linked galactose moieties. It is particularly suitable for the hydrolysis of guar gum to a gum with improved gelling properties. Preferentially cleaves alpha-1,6 glycoside linkages.</text>
</comment>
<comment type="catalytic activity">
    <reaction>
        <text>Hydrolysis of terminal, non-reducing alpha-D-galactose residues in alpha-D-galactosides, including galactose oligosaccharides, galactomannans and galactolipids.</text>
        <dbReference type="EC" id="3.2.1.22"/>
    </reaction>
</comment>
<comment type="similarity">
    <text evidence="4">Belongs to the glycosyl hydrolase 27 family.</text>
</comment>
<feature type="signal peptide">
    <location>
        <begin position="1"/>
        <end position="24"/>
    </location>
</feature>
<feature type="propeptide" id="PRO_0000001002" evidence="3">
    <location>
        <begin position="25"/>
        <end position="47"/>
    </location>
</feature>
<feature type="chain" id="PRO_0000001003" description="Alpha-galactosidase">
    <location>
        <begin position="48"/>
        <end position="411"/>
    </location>
</feature>
<feature type="active site" description="Nucleophile" evidence="1">
    <location>
        <position position="177"/>
    </location>
</feature>
<feature type="active site" description="Proton donor" evidence="1">
    <location>
        <position position="232"/>
    </location>
</feature>
<feature type="binding site" evidence="1">
    <location>
        <begin position="210"/>
        <end position="214"/>
    </location>
    <ligand>
        <name>substrate</name>
    </ligand>
</feature>
<feature type="glycosylation site" description="N-linked (GlcNAc...) asparagine" evidence="2">
    <location>
        <position position="32"/>
    </location>
</feature>
<feature type="glycosylation site" description="N-linked (GlcNAc...) asparagine" evidence="2">
    <location>
        <position position="145"/>
    </location>
</feature>
<feature type="glycosylation site" description="N-linked (GlcNAc...) asparagine" evidence="2">
    <location>
        <position position="352"/>
    </location>
</feature>
<feature type="disulfide bond" evidence="1">
    <location>
        <begin position="68"/>
        <end position="100"/>
    </location>
</feature>
<feature type="disulfide bond" evidence="1">
    <location>
        <begin position="148"/>
        <end position="179"/>
    </location>
</feature>
<dbReference type="EC" id="3.2.1.22"/>
<dbReference type="EMBL" id="X14619">
    <property type="protein sequence ID" value="CAA32772.1"/>
    <property type="molecule type" value="mRNA"/>
</dbReference>
<dbReference type="PIR" id="S07472">
    <property type="entry name" value="S07472"/>
</dbReference>
<dbReference type="SMR" id="P14749"/>
<dbReference type="CAZy" id="GH27">
    <property type="family name" value="Glycoside Hydrolase Family 27"/>
</dbReference>
<dbReference type="GO" id="GO:0009505">
    <property type="term" value="C:plant-type cell wall"/>
    <property type="evidence" value="ECO:0007669"/>
    <property type="project" value="TreeGrafter"/>
</dbReference>
<dbReference type="GO" id="GO:0004557">
    <property type="term" value="F:alpha-galactosidase activity"/>
    <property type="evidence" value="ECO:0007669"/>
    <property type="project" value="UniProtKB-EC"/>
</dbReference>
<dbReference type="GO" id="GO:0005975">
    <property type="term" value="P:carbohydrate metabolic process"/>
    <property type="evidence" value="ECO:0007669"/>
    <property type="project" value="InterPro"/>
</dbReference>
<dbReference type="CDD" id="cd14792">
    <property type="entry name" value="GH27"/>
    <property type="match status" value="1"/>
</dbReference>
<dbReference type="FunFam" id="2.60.40.1180:FF:000008">
    <property type="entry name" value="Alpha-galactosidase"/>
    <property type="match status" value="1"/>
</dbReference>
<dbReference type="FunFam" id="3.20.20.70:FF:000093">
    <property type="entry name" value="Alpha-galactosidase"/>
    <property type="match status" value="1"/>
</dbReference>
<dbReference type="Gene3D" id="3.20.20.70">
    <property type="entry name" value="Aldolase class I"/>
    <property type="match status" value="1"/>
</dbReference>
<dbReference type="Gene3D" id="2.60.40.1180">
    <property type="entry name" value="Golgi alpha-mannosidase II"/>
    <property type="match status" value="1"/>
</dbReference>
<dbReference type="InterPro" id="IPR013785">
    <property type="entry name" value="Aldolase_TIM"/>
</dbReference>
<dbReference type="InterPro" id="IPR002241">
    <property type="entry name" value="Glyco_hydro_27"/>
</dbReference>
<dbReference type="InterPro" id="IPR000111">
    <property type="entry name" value="Glyco_hydro_27/36_CS"/>
</dbReference>
<dbReference type="InterPro" id="IPR013780">
    <property type="entry name" value="Glyco_hydro_b"/>
</dbReference>
<dbReference type="InterPro" id="IPR017853">
    <property type="entry name" value="Glycoside_hydrolase_SF"/>
</dbReference>
<dbReference type="InterPro" id="IPR041233">
    <property type="entry name" value="Melibiase_C"/>
</dbReference>
<dbReference type="PANTHER" id="PTHR11452:SF73">
    <property type="entry name" value="ALPHA-GALACTOSIDASE"/>
    <property type="match status" value="1"/>
</dbReference>
<dbReference type="PANTHER" id="PTHR11452">
    <property type="entry name" value="ALPHA-GALACTOSIDASE/ALPHA-N-ACETYLGALACTOSAMINIDASE"/>
    <property type="match status" value="1"/>
</dbReference>
<dbReference type="Pfam" id="PF16499">
    <property type="entry name" value="Melibiase_2"/>
    <property type="match status" value="1"/>
</dbReference>
<dbReference type="Pfam" id="PF17801">
    <property type="entry name" value="Melibiase_C"/>
    <property type="match status" value="1"/>
</dbReference>
<dbReference type="PRINTS" id="PR00740">
    <property type="entry name" value="GLHYDRLASE27"/>
</dbReference>
<dbReference type="SUPFAM" id="SSF51445">
    <property type="entry name" value="(Trans)glycosidases"/>
    <property type="match status" value="1"/>
</dbReference>
<dbReference type="SUPFAM" id="SSF51011">
    <property type="entry name" value="Glycosyl hydrolase domain"/>
    <property type="match status" value="1"/>
</dbReference>
<dbReference type="PROSITE" id="PS00512">
    <property type="entry name" value="ALPHA_GALACTOSIDASE"/>
    <property type="match status" value="1"/>
</dbReference>
<accession>P14749</accession>
<evidence type="ECO:0000250" key="1"/>
<evidence type="ECO:0000255" key="2"/>
<evidence type="ECO:0000269" key="3">
    <source ref="2"/>
</evidence>
<evidence type="ECO:0000305" key="4"/>
<sequence length="411" mass="45136">MATHYSIIGGMIIVVLLMIIGSEGGRLLEKKNRTSAEAEHYNVRRYLAENGLGQTPPMGWNSWNHFGCDINENVVRETADAMVSTGLAALGYQYINLDDCWAELNRDSEGNMVPNAAAFPSGIKALADYVHSKGLKLGVYSDAGNQTCSKRMPGSLGHEEQDAKTFASWGVDYLKYDNCENLGISVKERYPPMGKALLSSGRPIFFSMCEWGWEDPQIWAKSIGNSWRTTGDIEDNWNSMTSIADSNDKWASYAGPGGWNDPDMLEVGNGGMTTEEYRSHFSIWALAKAPLLVGCDIRAMDDTTHELISNAEVIAVNQDKLGVQGKKVKSTNDLEVWAGPLSDNKVAVILWNRSSSRATVTASWSDIGLQQGTTVDARDLWEHSTQSLVSGEISAEIDSHACKMYVLTPRS</sequence>